<name>CUPC9_CANPG</name>
<proteinExistence type="evidence at protein level"/>
<keyword id="KW-0193">Cuticle</keyword>
<keyword id="KW-0903">Direct protein sequencing</keyword>
<keyword id="KW-0677">Repeat</keyword>
<dbReference type="SMR" id="P81590"/>
<dbReference type="GO" id="GO:0042302">
    <property type="term" value="F:structural constituent of cuticle"/>
    <property type="evidence" value="ECO:0007669"/>
    <property type="project" value="UniProtKB-KW"/>
</dbReference>
<dbReference type="InterPro" id="IPR012539">
    <property type="entry name" value="Cuticle_1"/>
</dbReference>
<dbReference type="Pfam" id="PF08140">
    <property type="entry name" value="Cuticle_1"/>
    <property type="match status" value="1"/>
</dbReference>
<evidence type="ECO:0000269" key="1">
    <source>
    </source>
</evidence>
<reference key="1">
    <citation type="journal article" date="1999" name="Comp. Biochem. Physiol.">
        <title>Exoskeletal proteins from the crab, Cancer pagurus.</title>
        <authorList>
            <person name="Andersen S.O."/>
        </authorList>
    </citation>
    <scope>PROTEIN SEQUENCE</scope>
    <scope>MASS SPECTROMETRY</scope>
    <source>
        <tissue>Carapace cuticle</tissue>
    </source>
</reference>
<organism>
    <name type="scientific">Cancer pagurus</name>
    <name type="common">Rock crab</name>
    <dbReference type="NCBI Taxonomy" id="6755"/>
    <lineage>
        <taxon>Eukaryota</taxon>
        <taxon>Metazoa</taxon>
        <taxon>Ecdysozoa</taxon>
        <taxon>Arthropoda</taxon>
        <taxon>Crustacea</taxon>
        <taxon>Multicrustacea</taxon>
        <taxon>Malacostraca</taxon>
        <taxon>Eumalacostraca</taxon>
        <taxon>Eucarida</taxon>
        <taxon>Decapoda</taxon>
        <taxon>Pleocyemata</taxon>
        <taxon>Brachyura</taxon>
        <taxon>Eubrachyura</taxon>
        <taxon>Cancroidea</taxon>
        <taxon>Cancridae</taxon>
        <taxon>Cancer</taxon>
    </lineage>
</organism>
<comment type="tissue specificity">
    <text>Calcified shell.</text>
</comment>
<comment type="mass spectrometry"/>
<protein>
    <recommendedName>
        <fullName>Cuticle protein CP466</fullName>
        <shortName>CPCP466</shortName>
    </recommendedName>
</protein>
<accession>P81590</accession>
<feature type="chain" id="PRO_0000196171" description="Cuticle protein CP466">
    <location>
        <begin position="1"/>
        <end position="44"/>
    </location>
</feature>
<feature type="repeat" description="1">
    <location>
        <begin position="3"/>
        <end position="20"/>
    </location>
</feature>
<feature type="repeat" description="2">
    <location>
        <begin position="27"/>
        <end position="44"/>
    </location>
</feature>
<sequence>EVLLEGPSGVLFKDGQKKYLPPGVKIVLLTESGAVLSNGDNVQF</sequence>